<organism>
    <name type="scientific">Homo sapiens</name>
    <name type="common">Human</name>
    <dbReference type="NCBI Taxonomy" id="9606"/>
    <lineage>
        <taxon>Eukaryota</taxon>
        <taxon>Metazoa</taxon>
        <taxon>Chordata</taxon>
        <taxon>Craniata</taxon>
        <taxon>Vertebrata</taxon>
        <taxon>Euteleostomi</taxon>
        <taxon>Mammalia</taxon>
        <taxon>Eutheria</taxon>
        <taxon>Euarchontoglires</taxon>
        <taxon>Primates</taxon>
        <taxon>Haplorrhini</taxon>
        <taxon>Catarrhini</taxon>
        <taxon>Hominidae</taxon>
        <taxon>Homo</taxon>
    </lineage>
</organism>
<sequence length="359" mass="39589">MLSAASRVVSRAAVHCALRSPPPEARALAMSRPPPPRVASVLGTMEMGRRMDAPASAAAVRAFLERGHTELDTAFMYSDGQSETILGGLGLGLGGGDCRVKIATKANPWDGKSLKPDSVRSQLETSLKRLQCPQVDLFYLHAPDHGTPVEETLHACQRLHQEGKFVELGLSNYASWEVAEICTLCKSNGWILPTVYQGMYNATTRQVETELFPCLRHFGLRFYAYNPLAGGLLTGKYKYEDKDGKQPVGRFFGNSWAETYRNRFWKEHHFEAIALVEKALQAAYGASAPSVTSAALRWMYHHSQLQGAHGDAVILGMSSLEQLEQNLAATEEGPLEPAVVDAFNQAWHLVAHECPNYFR</sequence>
<dbReference type="EC" id="1.1.1.n11"/>
<dbReference type="EMBL" id="AL035413">
    <property type="status" value="NOT_ANNOTATED_CDS"/>
    <property type="molecule type" value="Genomic_DNA"/>
</dbReference>
<dbReference type="EMBL" id="BC004111">
    <property type="protein sequence ID" value="AAH04111.3"/>
    <property type="status" value="ALT_INIT"/>
    <property type="molecule type" value="mRNA"/>
</dbReference>
<dbReference type="EMBL" id="BC007352">
    <property type="protein sequence ID" value="AAH07352.2"/>
    <property type="molecule type" value="mRNA"/>
</dbReference>
<dbReference type="EMBL" id="BC010852">
    <property type="protein sequence ID" value="AAH10852.1"/>
    <property type="status" value="ALT_INIT"/>
    <property type="molecule type" value="mRNA"/>
</dbReference>
<dbReference type="EMBL" id="BC011586">
    <property type="protein sequence ID" value="AAH11586.1"/>
    <property type="status" value="ALT_INIT"/>
    <property type="molecule type" value="mRNA"/>
</dbReference>
<dbReference type="EMBL" id="BC012171">
    <property type="protein sequence ID" value="AAH12171.1"/>
    <property type="status" value="ALT_INIT"/>
    <property type="molecule type" value="mRNA"/>
</dbReference>
<dbReference type="EMBL" id="BC013996">
    <property type="protein sequence ID" value="AAH13996.1"/>
    <property type="status" value="ALT_INIT"/>
    <property type="molecule type" value="mRNA"/>
</dbReference>
<dbReference type="EMBL" id="AF026947">
    <property type="protein sequence ID" value="AAC52104.1"/>
    <property type="status" value="ALT_INIT"/>
    <property type="molecule type" value="mRNA"/>
</dbReference>
<dbReference type="EMBL" id="Y16675">
    <property type="protein sequence ID" value="CAA76347.1"/>
    <property type="status" value="ALT_INIT"/>
    <property type="molecule type" value="mRNA"/>
</dbReference>
<dbReference type="EMBL" id="BT007347">
    <property type="protein sequence ID" value="AAP36011.1"/>
    <property type="status" value="ALT_INIT"/>
    <property type="molecule type" value="mRNA"/>
</dbReference>
<dbReference type="EMBL" id="BK000395">
    <property type="protein sequence ID" value="DAA00088.1"/>
    <property type="molecule type" value="mRNA"/>
</dbReference>
<dbReference type="CCDS" id="CCDS194.1"/>
<dbReference type="RefSeq" id="NP_003680.2">
    <property type="nucleotide sequence ID" value="NM_003689.3"/>
</dbReference>
<dbReference type="PDB" id="2BP1">
    <property type="method" value="X-ray"/>
    <property type="resolution" value="2.40 A"/>
    <property type="chains" value="A/B/C/D=1-359"/>
</dbReference>
<dbReference type="PDBsum" id="2BP1"/>
<dbReference type="SMR" id="O43488"/>
<dbReference type="BioGRID" id="114142">
    <property type="interactions" value="79"/>
</dbReference>
<dbReference type="FunCoup" id="O43488">
    <property type="interactions" value="1255"/>
</dbReference>
<dbReference type="IntAct" id="O43488">
    <property type="interactions" value="59"/>
</dbReference>
<dbReference type="STRING" id="9606.ENSP00000235835"/>
<dbReference type="GlyGen" id="O43488">
    <property type="glycosylation" value="1 site, 1 O-linked glycan (1 site)"/>
</dbReference>
<dbReference type="iPTMnet" id="O43488"/>
<dbReference type="MetOSite" id="O43488"/>
<dbReference type="PhosphoSitePlus" id="O43488"/>
<dbReference type="SwissPalm" id="O43488"/>
<dbReference type="BioMuta" id="AKR7A2"/>
<dbReference type="REPRODUCTION-2DPAGE" id="IPI00305978"/>
<dbReference type="REPRODUCTION-2DPAGE" id="O43488"/>
<dbReference type="jPOST" id="O43488"/>
<dbReference type="MassIVE" id="O43488"/>
<dbReference type="PaxDb" id="9606-ENSP00000235835"/>
<dbReference type="PeptideAtlas" id="O43488"/>
<dbReference type="ProteomicsDB" id="48966"/>
<dbReference type="Pumba" id="O43488"/>
<dbReference type="Antibodypedia" id="29614">
    <property type="antibodies" value="275 antibodies from 31 providers"/>
</dbReference>
<dbReference type="DNASU" id="8574"/>
<dbReference type="Ensembl" id="ENST00000235835.8">
    <property type="protein sequence ID" value="ENSP00000235835.3"/>
    <property type="gene ID" value="ENSG00000053371.14"/>
</dbReference>
<dbReference type="GeneID" id="8574"/>
<dbReference type="KEGG" id="hsa:8574"/>
<dbReference type="MANE-Select" id="ENST00000235835.8">
    <property type="protein sequence ID" value="ENSP00000235835.3"/>
    <property type="RefSeq nucleotide sequence ID" value="NM_003689.4"/>
    <property type="RefSeq protein sequence ID" value="NP_003680.2"/>
</dbReference>
<dbReference type="AGR" id="HGNC:389"/>
<dbReference type="CTD" id="8574"/>
<dbReference type="DisGeNET" id="8574"/>
<dbReference type="GeneCards" id="AKR7A2"/>
<dbReference type="HGNC" id="HGNC:389">
    <property type="gene designation" value="AKR7A2"/>
</dbReference>
<dbReference type="HPA" id="ENSG00000053371">
    <property type="expression patterns" value="Low tissue specificity"/>
</dbReference>
<dbReference type="MIM" id="603418">
    <property type="type" value="gene"/>
</dbReference>
<dbReference type="neXtProt" id="NX_O43488"/>
<dbReference type="OpenTargets" id="ENSG00000053371"/>
<dbReference type="PharmGKB" id="PA24682"/>
<dbReference type="VEuPathDB" id="HostDB:ENSG00000053371"/>
<dbReference type="eggNOG" id="ENOG502QU2T">
    <property type="taxonomic scope" value="Eukaryota"/>
</dbReference>
<dbReference type="GeneTree" id="ENSGT00940000164191"/>
<dbReference type="HOGENOM" id="CLU_023205_1_1_1"/>
<dbReference type="InParanoid" id="O43488"/>
<dbReference type="OMA" id="TAPNYWH"/>
<dbReference type="OrthoDB" id="48988at2759"/>
<dbReference type="PAN-GO" id="O43488">
    <property type="GO annotations" value="2 GO annotations based on evolutionary models"/>
</dbReference>
<dbReference type="PhylomeDB" id="O43488"/>
<dbReference type="TreeFam" id="TF329173"/>
<dbReference type="BioCyc" id="MetaCyc:ENSG00000053371-MONOMER"/>
<dbReference type="PathwayCommons" id="O43488"/>
<dbReference type="Reactome" id="R-HSA-5423646">
    <property type="pathway name" value="Aflatoxin activation and detoxification"/>
</dbReference>
<dbReference type="SABIO-RK" id="O43488"/>
<dbReference type="SignaLink" id="O43488"/>
<dbReference type="BioGRID-ORCS" id="8574">
    <property type="hits" value="9 hits in 1164 CRISPR screens"/>
</dbReference>
<dbReference type="CD-CODE" id="FB4E32DD">
    <property type="entry name" value="Presynaptic clusters and postsynaptic densities"/>
</dbReference>
<dbReference type="ChiTaRS" id="AKR7A2">
    <property type="organism name" value="human"/>
</dbReference>
<dbReference type="EvolutionaryTrace" id="O43488"/>
<dbReference type="GeneWiki" id="AKR7A2"/>
<dbReference type="GenomeRNAi" id="8574"/>
<dbReference type="Pharos" id="O43488">
    <property type="development level" value="Tbio"/>
</dbReference>
<dbReference type="PRO" id="PR:O43488"/>
<dbReference type="Proteomes" id="UP000005640">
    <property type="component" value="Chromosome 1"/>
</dbReference>
<dbReference type="RNAct" id="O43488">
    <property type="molecule type" value="protein"/>
</dbReference>
<dbReference type="Bgee" id="ENSG00000053371">
    <property type="expression patterns" value="Expressed in mucosa of transverse colon and 201 other cell types or tissues"/>
</dbReference>
<dbReference type="ExpressionAtlas" id="O43488">
    <property type="expression patterns" value="baseline and differential"/>
</dbReference>
<dbReference type="GO" id="GO:0005737">
    <property type="term" value="C:cytoplasm"/>
    <property type="evidence" value="ECO:0000318"/>
    <property type="project" value="GO_Central"/>
</dbReference>
<dbReference type="GO" id="GO:0005829">
    <property type="term" value="C:cytosol"/>
    <property type="evidence" value="ECO:0000314"/>
    <property type="project" value="HPA"/>
</dbReference>
<dbReference type="GO" id="GO:0070062">
    <property type="term" value="C:extracellular exosome"/>
    <property type="evidence" value="ECO:0007005"/>
    <property type="project" value="UniProtKB"/>
</dbReference>
<dbReference type="GO" id="GO:0005794">
    <property type="term" value="C:Golgi apparatus"/>
    <property type="evidence" value="ECO:0000314"/>
    <property type="project" value="HPA"/>
</dbReference>
<dbReference type="GO" id="GO:0005739">
    <property type="term" value="C:mitochondrion"/>
    <property type="evidence" value="ECO:0006056"/>
    <property type="project" value="FlyBase"/>
</dbReference>
<dbReference type="GO" id="GO:0004033">
    <property type="term" value="F:aldo-keto reductase (NADPH) activity"/>
    <property type="evidence" value="ECO:0000318"/>
    <property type="project" value="GO_Central"/>
</dbReference>
<dbReference type="GO" id="GO:0004032">
    <property type="term" value="F:aldose reductase (NADPH) activity"/>
    <property type="evidence" value="ECO:0000304"/>
    <property type="project" value="ProtInc"/>
</dbReference>
<dbReference type="GO" id="GO:0009055">
    <property type="term" value="F:electron transfer activity"/>
    <property type="evidence" value="ECO:0000304"/>
    <property type="project" value="UniProtKB"/>
</dbReference>
<dbReference type="GO" id="GO:0019119">
    <property type="term" value="F:phenanthrene-9,10-epoxide hydrolase activity"/>
    <property type="evidence" value="ECO:0000314"/>
    <property type="project" value="UniProtKB"/>
</dbReference>
<dbReference type="GO" id="GO:0006081">
    <property type="term" value="P:aldehyde metabolic process"/>
    <property type="evidence" value="ECO:0000304"/>
    <property type="project" value="ProtInc"/>
</dbReference>
<dbReference type="GO" id="GO:0005975">
    <property type="term" value="P:carbohydrate metabolic process"/>
    <property type="evidence" value="ECO:0000304"/>
    <property type="project" value="ProtInc"/>
</dbReference>
<dbReference type="GO" id="GO:0044597">
    <property type="term" value="P:daunorubicin metabolic process"/>
    <property type="evidence" value="ECO:0000315"/>
    <property type="project" value="UniProtKB"/>
</dbReference>
<dbReference type="GO" id="GO:0044598">
    <property type="term" value="P:doxorubicin metabolic process"/>
    <property type="evidence" value="ECO:0000315"/>
    <property type="project" value="UniProtKB"/>
</dbReference>
<dbReference type="GO" id="GO:0006629">
    <property type="term" value="P:lipid metabolic process"/>
    <property type="evidence" value="ECO:0007669"/>
    <property type="project" value="UniProtKB-KW"/>
</dbReference>
<dbReference type="CDD" id="cd19075">
    <property type="entry name" value="AKR_AKR7A1-5"/>
    <property type="match status" value="1"/>
</dbReference>
<dbReference type="FunFam" id="3.20.20.100:FF:000017">
    <property type="entry name" value="Aflatoxin B1 aldehyde reductase member 2"/>
    <property type="match status" value="1"/>
</dbReference>
<dbReference type="Gene3D" id="3.20.20.100">
    <property type="entry name" value="NADP-dependent oxidoreductase domain"/>
    <property type="match status" value="1"/>
</dbReference>
<dbReference type="InterPro" id="IPR050523">
    <property type="entry name" value="AKR_Detox_Biosynth"/>
</dbReference>
<dbReference type="InterPro" id="IPR023210">
    <property type="entry name" value="NADP_OxRdtase_dom"/>
</dbReference>
<dbReference type="InterPro" id="IPR036812">
    <property type="entry name" value="NADP_OxRdtase_dom_sf"/>
</dbReference>
<dbReference type="PANTHER" id="PTHR43364:SF4">
    <property type="entry name" value="NAD(P)-LINKED OXIDOREDUCTASE SUPERFAMILY PROTEIN"/>
    <property type="match status" value="1"/>
</dbReference>
<dbReference type="PANTHER" id="PTHR43364">
    <property type="entry name" value="NADH-SPECIFIC METHYLGLYOXAL REDUCTASE-RELATED"/>
    <property type="match status" value="1"/>
</dbReference>
<dbReference type="Pfam" id="PF00248">
    <property type="entry name" value="Aldo_ket_red"/>
    <property type="match status" value="1"/>
</dbReference>
<dbReference type="SUPFAM" id="SSF51430">
    <property type="entry name" value="NAD(P)-linked oxidoreductase"/>
    <property type="match status" value="1"/>
</dbReference>
<name>ARK72_HUMAN</name>
<comment type="function">
    <text evidence="6 8">Catalyzes the NADPH-dependent reduction of succinic semialdehyde to gamma-hydroxybutyrate. May have an important role in producing the neuromodulator gamma-hydroxybutyrate (GHB). Has broad substrate specificity. Has NADPH-dependent aldehyde reductase activity towards 2-carboxybenzaldehyde, 2-nitrobenzaldehyde and pyridine-2-aldehyde (in vitro). Can reduce 1,2-naphthoquinone and 9,10-phenanthrenequinone (in vitro). Can reduce the dialdehyde protein-binding form of aflatoxin B1 (AFB1) to the non-binding AFB1 dialcohol. May be involved in protection of liver against the toxic and carcinogenic effects of AFB1, a potent hepatocarcinogen.</text>
</comment>
<comment type="catalytic activity">
    <reaction evidence="5">
        <text>4-hydroxybutanoate + NADP(+) = succinate semialdehyde + NADPH + H(+)</text>
        <dbReference type="Rhea" id="RHEA:26381"/>
        <dbReference type="ChEBI" id="CHEBI:15378"/>
        <dbReference type="ChEBI" id="CHEBI:16724"/>
        <dbReference type="ChEBI" id="CHEBI:57706"/>
        <dbReference type="ChEBI" id="CHEBI:57783"/>
        <dbReference type="ChEBI" id="CHEBI:58349"/>
        <dbReference type="EC" id="1.1.1.n11"/>
    </reaction>
</comment>
<comment type="biophysicochemical properties">
    <kinetics>
        <KM evidence="5">20 uM for succinic semialdehyde</KM>
        <KM evidence="5">17 uM for 2-carboxybenzaldehyde</KM>
        <KM evidence="5">8 uM for 9,10-phenanthrenequinone</KM>
        <KM evidence="5">102 uM for 1,2-naphthoquinone</KM>
    </kinetics>
</comment>
<comment type="subunit">
    <text evidence="8 9">Homodimer.</text>
</comment>
<comment type="interaction">
    <interactant intactId="EBI-748855">
        <id>O43488</id>
    </interactant>
    <interactant intactId="EBI-748869">
        <id>O95154</id>
        <label>AKR7A3</label>
    </interactant>
    <organismsDiffer>false</organismsDiffer>
    <experiments>8</experiments>
</comment>
<comment type="interaction">
    <interactant intactId="EBI-748855">
        <id>O43488</id>
    </interactant>
    <interactant intactId="EBI-21535880">
        <id>Q92870-2</id>
        <label>APBB2</label>
    </interactant>
    <organismsDiffer>false</organismsDiffer>
    <experiments>3</experiments>
</comment>
<comment type="interaction">
    <interactant intactId="EBI-748855">
        <id>O43488</id>
    </interactant>
    <interactant intactId="EBI-946046">
        <id>P54252</id>
        <label>ATXN3</label>
    </interactant>
    <organismsDiffer>false</organismsDiffer>
    <experiments>3</experiments>
</comment>
<comment type="interaction">
    <interactant intactId="EBI-748855">
        <id>O43488</id>
    </interactant>
    <interactant intactId="EBI-6309037">
        <id>Q8WWM9</id>
        <label>CYGB</label>
    </interactant>
    <organismsDiffer>false</organismsDiffer>
    <experiments>3</experiments>
</comment>
<comment type="interaction">
    <interactant intactId="EBI-748855">
        <id>O43488</id>
    </interactant>
    <interactant intactId="EBI-2682961">
        <id>Q9Y2K1</id>
        <label>ZBTB1</label>
    </interactant>
    <organismsDiffer>false</organismsDiffer>
    <experiments>4</experiments>
</comment>
<comment type="subcellular location">
    <subcellularLocation>
        <location evidence="4">Mitochondrion</location>
    </subcellularLocation>
    <subcellularLocation>
        <location evidence="2">Golgi apparatus</location>
    </subcellularLocation>
    <subcellularLocation>
        <location evidence="8">Cytoplasm</location>
    </subcellularLocation>
</comment>
<comment type="tissue specificity">
    <text evidence="5 8">Detected in brain, liver, small intestine and testis, and at lower levels in heart, prostate, skeletal muscle and spleen. Detected in kidney proximal and distal tubules, endothelial cells lining the Bowman's capsules and some cysts. Detected at low levels in lung and pancreas (at protein level). Widely expressed.</text>
</comment>
<comment type="similarity">
    <text evidence="10">Belongs to the aldo/keto reductase family. Aldo/keto reductase 2 subfamily.</text>
</comment>
<comment type="caution">
    <text evidence="10">It is uncertain whether Met-1 or Met-30 is the initiator.</text>
</comment>
<comment type="sequence caution" evidence="10">
    <conflict type="erroneous initiation">
        <sequence resource="EMBL-CDS" id="AAC52104"/>
    </conflict>
</comment>
<comment type="sequence caution" evidence="10">
    <conflict type="erroneous initiation">
        <sequence resource="EMBL-CDS" id="AAH04111"/>
    </conflict>
</comment>
<comment type="sequence caution" evidence="10">
    <conflict type="erroneous initiation">
        <sequence resource="EMBL-CDS" id="AAH10852"/>
    </conflict>
</comment>
<comment type="sequence caution" evidence="10">
    <conflict type="erroneous initiation">
        <sequence resource="EMBL-CDS" id="AAH11586"/>
    </conflict>
</comment>
<comment type="sequence caution" evidence="10">
    <conflict type="erroneous initiation">
        <sequence resource="EMBL-CDS" id="AAH12171"/>
    </conflict>
</comment>
<comment type="sequence caution" evidence="10">
    <conflict type="erroneous initiation">
        <sequence resource="EMBL-CDS" id="AAH13996"/>
    </conflict>
</comment>
<comment type="sequence caution" evidence="10">
    <conflict type="erroneous initiation">
        <sequence resource="EMBL-CDS" id="AAP36011"/>
    </conflict>
</comment>
<comment type="sequence caution" evidence="10">
    <conflict type="erroneous initiation">
        <sequence resource="EMBL-CDS" id="CAA76347"/>
    </conflict>
</comment>
<protein>
    <recommendedName>
        <fullName>Aflatoxin B1 aldehyde reductase member 2</fullName>
        <ecNumber>1.1.1.n11</ecNumber>
    </recommendedName>
    <alternativeName>
        <fullName>AFB1 aldehyde reductase 1</fullName>
        <shortName>AFB1-AR 1</shortName>
    </alternativeName>
    <alternativeName>
        <fullName>Aldoketoreductase 7</fullName>
    </alternativeName>
    <alternativeName>
        <fullName>Succinic semialdehyde reductase</fullName>
        <shortName>SSA reductase</shortName>
    </alternativeName>
</protein>
<feature type="transit peptide" description="Mitochondrion" evidence="4">
    <location>
        <begin position="1"/>
        <end position="38"/>
    </location>
</feature>
<feature type="chain" id="PRO_0000070375" description="Aflatoxin B1 aldehyde reductase member 2">
    <location>
        <begin position="39"/>
        <end position="359"/>
    </location>
</feature>
<feature type="active site" description="Proton donor" evidence="1">
    <location>
        <position position="77"/>
    </location>
</feature>
<feature type="binding site" evidence="9">
    <location>
        <position position="72"/>
    </location>
    <ligand>
        <name>NADP(+)</name>
        <dbReference type="ChEBI" id="CHEBI:58349"/>
    </ligand>
</feature>
<feature type="binding site" evidence="1">
    <location>
        <position position="141"/>
    </location>
    <ligand>
        <name>substrate</name>
    </ligand>
</feature>
<feature type="binding site" evidence="9">
    <location>
        <begin position="171"/>
        <end position="172"/>
    </location>
    <ligand>
        <name>NADP(+)</name>
        <dbReference type="ChEBI" id="CHEBI:58349"/>
    </ligand>
</feature>
<feature type="binding site" evidence="9">
    <location>
        <position position="197"/>
    </location>
    <ligand>
        <name>NADP(+)</name>
        <dbReference type="ChEBI" id="CHEBI:58349"/>
    </ligand>
</feature>
<feature type="binding site" evidence="9">
    <location>
        <begin position="226"/>
        <end position="236"/>
    </location>
    <ligand>
        <name>NADP(+)</name>
        <dbReference type="ChEBI" id="CHEBI:58349"/>
    </ligand>
</feature>
<feature type="binding site" evidence="9">
    <location>
        <position position="250"/>
    </location>
    <ligand>
        <name>NADP(+)</name>
        <dbReference type="ChEBI" id="CHEBI:58349"/>
    </ligand>
</feature>
<feature type="binding site" evidence="1">
    <location>
        <position position="260"/>
    </location>
    <ligand>
        <name>substrate</name>
    </ligand>
</feature>
<feature type="binding site" evidence="1">
    <location>
        <position position="263"/>
    </location>
    <ligand>
        <name>substrate</name>
    </ligand>
</feature>
<feature type="binding site" evidence="9">
    <location>
        <begin position="318"/>
        <end position="326"/>
    </location>
    <ligand>
        <name>NADP(+)</name>
        <dbReference type="ChEBI" id="CHEBI:58349"/>
    </ligand>
</feature>
<feature type="binding site" evidence="1">
    <location>
        <position position="359"/>
    </location>
    <ligand>
        <name>substrate</name>
    </ligand>
</feature>
<feature type="site" description="Lowers pKa of active site Tyr" evidence="1">
    <location>
        <position position="105"/>
    </location>
</feature>
<feature type="modified residue" description="Phosphoserine" evidence="3">
    <location>
        <position position="40"/>
    </location>
</feature>
<feature type="modified residue" description="N6-acetyllysine" evidence="3">
    <location>
        <position position="128"/>
    </location>
</feature>
<feature type="modified residue" description="N6-succinyllysine" evidence="3">
    <location>
        <position position="236"/>
    </location>
</feature>
<feature type="modified residue" description="Phosphoserine" evidence="11 12">
    <location>
        <position position="255"/>
    </location>
</feature>
<feature type="sequence variant" id="VAR_048209" description="In dbSNP:rs6670759.">
    <original>V</original>
    <variation>M</variation>
    <location>
        <position position="135"/>
    </location>
</feature>
<feature type="sequence variant" id="VAR_017413" description="In dbSNP:rs1043657." evidence="7 8">
    <original>A</original>
    <variation>T</variation>
    <location>
        <position position="142"/>
    </location>
</feature>
<feature type="sequence variant" id="VAR_017414" description="In dbSNP:rs859208." evidence="7">
    <original>Q</original>
    <variation>H</variation>
    <location>
        <position position="157"/>
    </location>
</feature>
<feature type="sequence variant" id="VAR_060222" description="In dbSNP:rs859210.">
    <original>E</original>
    <variation>K</variation>
    <location>
        <position position="180"/>
    </location>
</feature>
<feature type="sequence variant" id="VAR_048210" description="In dbSNP:rs2231200.">
    <original>G</original>
    <variation>S</variation>
    <location>
        <position position="198"/>
    </location>
</feature>
<feature type="sequence variant" id="VAR_017415" description="In dbSNP:rs2235794.">
    <original>C</original>
    <variation>Y</variation>
    <location>
        <position position="214"/>
    </location>
</feature>
<feature type="sequence variant" id="VAR_048211" description="In dbSNP:rs2231203.">
    <original>S</original>
    <variation>N</variation>
    <location>
        <position position="255"/>
    </location>
</feature>
<feature type="strand" evidence="13">
    <location>
        <begin position="39"/>
        <end position="43"/>
    </location>
</feature>
<feature type="turn" evidence="13">
    <location>
        <begin position="48"/>
        <end position="50"/>
    </location>
</feature>
<feature type="helix" evidence="13">
    <location>
        <begin position="53"/>
        <end position="65"/>
    </location>
</feature>
<feature type="strand" evidence="13">
    <location>
        <begin position="70"/>
        <end position="72"/>
    </location>
</feature>
<feature type="helix" evidence="13">
    <location>
        <begin position="77"/>
        <end position="80"/>
    </location>
</feature>
<feature type="helix" evidence="13">
    <location>
        <begin position="81"/>
        <end position="87"/>
    </location>
</feature>
<feature type="strand" evidence="13">
    <location>
        <begin position="101"/>
        <end position="106"/>
    </location>
</feature>
<feature type="helix" evidence="13">
    <location>
        <begin position="116"/>
        <end position="130"/>
    </location>
</feature>
<feature type="strand" evidence="13">
    <location>
        <begin position="135"/>
        <end position="140"/>
    </location>
</feature>
<feature type="helix" evidence="13">
    <location>
        <begin position="149"/>
        <end position="161"/>
    </location>
</feature>
<feature type="strand" evidence="13">
    <location>
        <begin position="164"/>
        <end position="172"/>
    </location>
</feature>
<feature type="helix" evidence="13">
    <location>
        <begin position="175"/>
        <end position="188"/>
    </location>
</feature>
<feature type="strand" evidence="13">
    <location>
        <begin position="193"/>
        <end position="199"/>
    </location>
</feature>
<feature type="helix" evidence="13">
    <location>
        <begin position="206"/>
        <end position="208"/>
    </location>
</feature>
<feature type="helix" evidence="13">
    <location>
        <begin position="211"/>
        <end position="218"/>
    </location>
</feature>
<feature type="strand" evidence="13">
    <location>
        <begin position="221"/>
        <end position="225"/>
    </location>
</feature>
<feature type="helix" evidence="13">
    <location>
        <begin position="229"/>
        <end position="234"/>
    </location>
</feature>
<feature type="helix" evidence="13">
    <location>
        <begin position="239"/>
        <end position="242"/>
    </location>
</feature>
<feature type="turn" evidence="13">
    <location>
        <begin position="243"/>
        <end position="245"/>
    </location>
</feature>
<feature type="strand" evidence="13">
    <location>
        <begin position="252"/>
        <end position="254"/>
    </location>
</feature>
<feature type="helix" evidence="13">
    <location>
        <begin position="257"/>
        <end position="264"/>
    </location>
</feature>
<feature type="helix" evidence="13">
    <location>
        <begin position="267"/>
        <end position="284"/>
    </location>
</feature>
<feature type="helix" evidence="13">
    <location>
        <begin position="285"/>
        <end position="287"/>
    </location>
</feature>
<feature type="helix" evidence="13">
    <location>
        <begin position="291"/>
        <end position="302"/>
    </location>
</feature>
<feature type="helix" evidence="13">
    <location>
        <begin position="307"/>
        <end position="309"/>
    </location>
</feature>
<feature type="strand" evidence="13">
    <location>
        <begin position="312"/>
        <end position="315"/>
    </location>
</feature>
<feature type="helix" evidence="13">
    <location>
        <begin position="320"/>
        <end position="330"/>
    </location>
</feature>
<feature type="helix" evidence="13">
    <location>
        <begin position="337"/>
        <end position="350"/>
    </location>
</feature>
<feature type="helix" evidence="13">
    <location>
        <begin position="351"/>
        <end position="353"/>
    </location>
</feature>
<accession>O43488</accession>
<accession>O75749</accession>
<accession>Q5TG63</accession>
<keyword id="KW-0002">3D-structure</keyword>
<keyword id="KW-0007">Acetylation</keyword>
<keyword id="KW-0963">Cytoplasm</keyword>
<keyword id="KW-0903">Direct protein sequencing</keyword>
<keyword id="KW-0333">Golgi apparatus</keyword>
<keyword id="KW-0443">Lipid metabolism</keyword>
<keyword id="KW-0496">Mitochondrion</keyword>
<keyword id="KW-0521">NADP</keyword>
<keyword id="KW-0560">Oxidoreductase</keyword>
<keyword id="KW-0597">Phosphoprotein</keyword>
<keyword id="KW-1267">Proteomics identification</keyword>
<keyword id="KW-1185">Reference proteome</keyword>
<keyword id="KW-0809">Transit peptide</keyword>
<proteinExistence type="evidence at protein level"/>
<reference key="1">
    <citation type="journal article" date="2006" name="Nature">
        <title>The DNA sequence and biological annotation of human chromosome 1.</title>
        <authorList>
            <person name="Gregory S.G."/>
            <person name="Barlow K.F."/>
            <person name="McLay K.E."/>
            <person name="Kaul R."/>
            <person name="Swarbreck D."/>
            <person name="Dunham A."/>
            <person name="Scott C.E."/>
            <person name="Howe K.L."/>
            <person name="Woodfine K."/>
            <person name="Spencer C.C.A."/>
            <person name="Jones M.C."/>
            <person name="Gillson C."/>
            <person name="Searle S."/>
            <person name="Zhou Y."/>
            <person name="Kokocinski F."/>
            <person name="McDonald L."/>
            <person name="Evans R."/>
            <person name="Phillips K."/>
            <person name="Atkinson A."/>
            <person name="Cooper R."/>
            <person name="Jones C."/>
            <person name="Hall R.E."/>
            <person name="Andrews T.D."/>
            <person name="Lloyd C."/>
            <person name="Ainscough R."/>
            <person name="Almeida J.P."/>
            <person name="Ambrose K.D."/>
            <person name="Anderson F."/>
            <person name="Andrew R.W."/>
            <person name="Ashwell R.I.S."/>
            <person name="Aubin K."/>
            <person name="Babbage A.K."/>
            <person name="Bagguley C.L."/>
            <person name="Bailey J."/>
            <person name="Beasley H."/>
            <person name="Bethel G."/>
            <person name="Bird C.P."/>
            <person name="Bray-Allen S."/>
            <person name="Brown J.Y."/>
            <person name="Brown A.J."/>
            <person name="Buckley D."/>
            <person name="Burton J."/>
            <person name="Bye J."/>
            <person name="Carder C."/>
            <person name="Chapman J.C."/>
            <person name="Clark S.Y."/>
            <person name="Clarke G."/>
            <person name="Clee C."/>
            <person name="Cobley V."/>
            <person name="Collier R.E."/>
            <person name="Corby N."/>
            <person name="Coville G.J."/>
            <person name="Davies J."/>
            <person name="Deadman R."/>
            <person name="Dunn M."/>
            <person name="Earthrowl M."/>
            <person name="Ellington A.G."/>
            <person name="Errington H."/>
            <person name="Frankish A."/>
            <person name="Frankland J."/>
            <person name="French L."/>
            <person name="Garner P."/>
            <person name="Garnett J."/>
            <person name="Gay L."/>
            <person name="Ghori M.R.J."/>
            <person name="Gibson R."/>
            <person name="Gilby L.M."/>
            <person name="Gillett W."/>
            <person name="Glithero R.J."/>
            <person name="Grafham D.V."/>
            <person name="Griffiths C."/>
            <person name="Griffiths-Jones S."/>
            <person name="Grocock R."/>
            <person name="Hammond S."/>
            <person name="Harrison E.S.I."/>
            <person name="Hart E."/>
            <person name="Haugen E."/>
            <person name="Heath P.D."/>
            <person name="Holmes S."/>
            <person name="Holt K."/>
            <person name="Howden P.J."/>
            <person name="Hunt A.R."/>
            <person name="Hunt S.E."/>
            <person name="Hunter G."/>
            <person name="Isherwood J."/>
            <person name="James R."/>
            <person name="Johnson C."/>
            <person name="Johnson D."/>
            <person name="Joy A."/>
            <person name="Kay M."/>
            <person name="Kershaw J.K."/>
            <person name="Kibukawa M."/>
            <person name="Kimberley A.M."/>
            <person name="King A."/>
            <person name="Knights A.J."/>
            <person name="Lad H."/>
            <person name="Laird G."/>
            <person name="Lawlor S."/>
            <person name="Leongamornlert D.A."/>
            <person name="Lloyd D.M."/>
            <person name="Loveland J."/>
            <person name="Lovell J."/>
            <person name="Lush M.J."/>
            <person name="Lyne R."/>
            <person name="Martin S."/>
            <person name="Mashreghi-Mohammadi M."/>
            <person name="Matthews L."/>
            <person name="Matthews N.S.W."/>
            <person name="McLaren S."/>
            <person name="Milne S."/>
            <person name="Mistry S."/>
            <person name="Moore M.J.F."/>
            <person name="Nickerson T."/>
            <person name="O'Dell C.N."/>
            <person name="Oliver K."/>
            <person name="Palmeiri A."/>
            <person name="Palmer S.A."/>
            <person name="Parker A."/>
            <person name="Patel D."/>
            <person name="Pearce A.V."/>
            <person name="Peck A.I."/>
            <person name="Pelan S."/>
            <person name="Phelps K."/>
            <person name="Phillimore B.J."/>
            <person name="Plumb R."/>
            <person name="Rajan J."/>
            <person name="Raymond C."/>
            <person name="Rouse G."/>
            <person name="Saenphimmachak C."/>
            <person name="Sehra H.K."/>
            <person name="Sheridan E."/>
            <person name="Shownkeen R."/>
            <person name="Sims S."/>
            <person name="Skuce C.D."/>
            <person name="Smith M."/>
            <person name="Steward C."/>
            <person name="Subramanian S."/>
            <person name="Sycamore N."/>
            <person name="Tracey A."/>
            <person name="Tromans A."/>
            <person name="Van Helmond Z."/>
            <person name="Wall M."/>
            <person name="Wallis J.M."/>
            <person name="White S."/>
            <person name="Whitehead S.L."/>
            <person name="Wilkinson J.E."/>
            <person name="Willey D.L."/>
            <person name="Williams H."/>
            <person name="Wilming L."/>
            <person name="Wray P.W."/>
            <person name="Wu Z."/>
            <person name="Coulson A."/>
            <person name="Vaudin M."/>
            <person name="Sulston J.E."/>
            <person name="Durbin R.M."/>
            <person name="Hubbard T."/>
            <person name="Wooster R."/>
            <person name="Dunham I."/>
            <person name="Carter N.P."/>
            <person name="McVean G."/>
            <person name="Ross M.T."/>
            <person name="Harrow J."/>
            <person name="Olson M.V."/>
            <person name="Beck S."/>
            <person name="Rogers J."/>
            <person name="Bentley D.R."/>
        </authorList>
    </citation>
    <scope>NUCLEOTIDE SEQUENCE [LARGE SCALE GENOMIC DNA]</scope>
</reference>
<reference key="2">
    <citation type="journal article" date="2004" name="Genome Res.">
        <title>The status, quality, and expansion of the NIH full-length cDNA project: the Mammalian Gene Collection (MGC).</title>
        <authorList>
            <consortium name="The MGC Project Team"/>
        </authorList>
    </citation>
    <scope>NUCLEOTIDE SEQUENCE [LARGE SCALE MRNA] OF 2-359</scope>
    <source>
        <tissue>Pancreas</tissue>
        <tissue>Skin</tissue>
        <tissue>Uterus</tissue>
    </source>
</reference>
<reference key="3">
    <citation type="journal article" date="1998" name="Biochem. J.">
        <title>Molecular cloning, expression and catalytic activity of a human AKR7 member of the aldo-keto reductase superfamily: evidence that the major 2-carboxybenzaldehyde reductase from human liver is a homologue of rat aflatoxin B1-aldehyde reductase.</title>
        <authorList>
            <person name="Ireland L.S."/>
            <person name="Harrison D.J."/>
            <person name="Neal G.E."/>
            <person name="Hayes J.D."/>
        </authorList>
    </citation>
    <scope>NUCLEOTIDE SEQUENCE [MRNA] OF 5-359</scope>
    <scope>PARTIAL PROTEIN SEQUENCE</scope>
    <scope>FUNCTION</scope>
    <scope>SUBUNIT</scope>
    <scope>SUBCELLULAR LOCATION</scope>
    <scope>TISSUE SPECIFICITY</scope>
    <scope>VARIANT THR-142</scope>
    <source>
        <tissue>Liver</tissue>
    </source>
</reference>
<reference key="4">
    <citation type="journal article" date="1998" name="Cancer Res.">
        <title>Cloning of the human aflatoxin B1-aldehyde reductase gene at 1p35-1p36.1 in a region frequently altered in human tumor cells.</title>
        <authorList>
            <person name="Praml C."/>
            <person name="Savelyeva L."/>
            <person name="Perri P."/>
            <person name="Schwab M."/>
        </authorList>
    </citation>
    <scope>NUCLEOTIDE SEQUENCE [MRNA] OF 7-359</scope>
    <source>
        <tissue>Brain</tissue>
    </source>
</reference>
<reference key="5">
    <citation type="submission" date="2003-05" db="EMBL/GenBank/DDBJ databases">
        <title>Cloning of human full-length CDSs in BD Creator(TM) system donor vector.</title>
        <authorList>
            <person name="Kalnine N."/>
            <person name="Chen X."/>
            <person name="Rolfs A."/>
            <person name="Halleck A."/>
            <person name="Hines L."/>
            <person name="Eisenstein S."/>
            <person name="Koundinya M."/>
            <person name="Raphael J."/>
            <person name="Moreira D."/>
            <person name="Kelley T."/>
            <person name="LaBaer J."/>
            <person name="Lin Y."/>
            <person name="Phelan M."/>
            <person name="Farmer A."/>
        </authorList>
    </citation>
    <scope>NUCLEOTIDE SEQUENCE [LARGE SCALE MRNA] OF 30-359</scope>
</reference>
<reference key="6">
    <citation type="submission" date="2007-03" db="UniProtKB">
        <authorList>
            <person name="Lubec G."/>
            <person name="Vishwanath V."/>
        </authorList>
    </citation>
    <scope>PROTEIN SEQUENCE OF 222-236; 251-261 AND 279-297</scope>
    <scope>IDENTIFICATION BY MASS SPECTROMETRY</scope>
    <source>
        <tissue>Brain</tissue>
        <tissue>Cajal-Retzius cell</tissue>
    </source>
</reference>
<reference key="7">
    <citation type="journal article" date="1999" name="Biochem. J.">
        <title>Major differences exist in the function and tissue-specific expression of human aflatoxin B1 aldehyde reductase and the principal human aldo-keto reductase AKR1 family members.</title>
        <authorList>
            <person name="O'Connor T."/>
            <person name="Ireland L.S."/>
            <person name="Harrison D.J."/>
            <person name="Hayes J.D."/>
        </authorList>
    </citation>
    <scope>CATALYTIC ACTIVITY</scope>
    <scope>BIOPHYSICOCHEMICAL PROPERTIES</scope>
    <scope>TISSUE SPECIFICITY</scope>
</reference>
<reference key="8">
    <citation type="journal article" date="2002" name="Biochem. J.">
        <title>Novel homodimeric and heterodimeric rat gamma-hydroxybutyrate synthases that associate with the Golgi apparatus define a distinct subclass of aldo-keto reductase 7 family proteins.</title>
        <authorList>
            <person name="Kelly V.P."/>
            <person name="Sherratt P.J."/>
            <person name="Crouch D.H."/>
            <person name="Hayes J.D."/>
        </authorList>
    </citation>
    <scope>GENE STRUCTURE</scope>
</reference>
<reference key="9">
    <citation type="journal article" date="2007" name="J. Biol. Chem.">
        <title>Synthesis and catabolism of gamma-hydroxybutyrate in SH-SY5Y human neuroblastoma cells: role of the aldo-keto reductase AKR7A2.</title>
        <authorList>
            <person name="Lyon R.C."/>
            <person name="Johnston S.M."/>
            <person name="Watson D.G."/>
            <person name="McGarvie G."/>
            <person name="Ellis E.M."/>
        </authorList>
    </citation>
    <scope>FUNCTION</scope>
</reference>
<reference key="10">
    <citation type="journal article" date="2011" name="BMC Syst. Biol.">
        <title>Initial characterization of the human central proteome.</title>
        <authorList>
            <person name="Burkard T.R."/>
            <person name="Planyavsky M."/>
            <person name="Kaupe I."/>
            <person name="Breitwieser F.P."/>
            <person name="Buerckstuemmer T."/>
            <person name="Bennett K.L."/>
            <person name="Superti-Furga G."/>
            <person name="Colinge J."/>
        </authorList>
    </citation>
    <scope>IDENTIFICATION BY MASS SPECTROMETRY [LARGE SCALE ANALYSIS]</scope>
</reference>
<reference key="11">
    <citation type="journal article" date="2013" name="J. Proteome Res.">
        <title>Toward a comprehensive characterization of a human cancer cell phosphoproteome.</title>
        <authorList>
            <person name="Zhou H."/>
            <person name="Di Palma S."/>
            <person name="Preisinger C."/>
            <person name="Peng M."/>
            <person name="Polat A.N."/>
            <person name="Heck A.J."/>
            <person name="Mohammed S."/>
        </authorList>
    </citation>
    <scope>PHOSPHORYLATION [LARGE SCALE ANALYSIS] AT SER-255</scope>
    <scope>IDENTIFICATION BY MASS SPECTROMETRY [LARGE SCALE ANALYSIS]</scope>
    <source>
        <tissue>Erythroleukemia</tissue>
    </source>
</reference>
<reference key="12">
    <citation type="journal article" date="2014" name="J. Proteomics">
        <title>An enzyme assisted RP-RPLC approach for in-depth analysis of human liver phosphoproteome.</title>
        <authorList>
            <person name="Bian Y."/>
            <person name="Song C."/>
            <person name="Cheng K."/>
            <person name="Dong M."/>
            <person name="Wang F."/>
            <person name="Huang J."/>
            <person name="Sun D."/>
            <person name="Wang L."/>
            <person name="Ye M."/>
            <person name="Zou H."/>
        </authorList>
    </citation>
    <scope>PHOSPHORYLATION [LARGE SCALE ANALYSIS] AT SER-255</scope>
    <scope>IDENTIFICATION BY MASS SPECTROMETRY [LARGE SCALE ANALYSIS]</scope>
    <source>
        <tissue>Liver</tissue>
    </source>
</reference>
<reference key="13">
    <citation type="journal article" date="2015" name="Proteomics">
        <title>N-terminome analysis of the human mitochondrial proteome.</title>
        <authorList>
            <person name="Vaca Jacome A.S."/>
            <person name="Rabilloud T."/>
            <person name="Schaeffer-Reiss C."/>
            <person name="Rompais M."/>
            <person name="Ayoub D."/>
            <person name="Lane L."/>
            <person name="Bairoch A."/>
            <person name="Van Dorsselaer A."/>
            <person name="Carapito C."/>
        </authorList>
    </citation>
    <scope>IDENTIFICATION BY MASS SPECTROMETRY [LARGE SCALE ANALYSIS]</scope>
</reference>
<reference key="14">
    <citation type="submission" date="2009-02" db="PDB data bank">
        <title>Structure of the aflatoxin aldehyde reductase in complex with NADPH.</title>
        <authorList>
            <consortium name="Structural genomics consortium (SGC)"/>
        </authorList>
    </citation>
    <scope>X-RAY CRYSTALLOGRAPHY (2.4 ANGSTROMS) IN COMPLEX WITH NADP</scope>
</reference>
<reference key="15">
    <citation type="journal article" date="2008" name="Cancer Lett.">
        <title>Genetic variation of aflatoxin B1 aldehyde reductase genes (AFAR) in human tumour cells.</title>
        <authorList>
            <person name="Praml C."/>
            <person name="Schulz W."/>
            <person name="Claas A."/>
            <person name="Mollenhauer J."/>
            <person name="Poustka A."/>
            <person name="Ackermann R."/>
            <person name="Schwab M."/>
            <person name="Henrich K.-O."/>
        </authorList>
    </citation>
    <scope>VARIANTS THR-142 AND HIS-157</scope>
</reference>
<evidence type="ECO:0000250" key="1"/>
<evidence type="ECO:0000250" key="2">
    <source>
        <dbReference type="UniProtKB" id="Q8CG45"/>
    </source>
</evidence>
<evidence type="ECO:0000250" key="3">
    <source>
        <dbReference type="UniProtKB" id="Q8CG76"/>
    </source>
</evidence>
<evidence type="ECO:0000255" key="4"/>
<evidence type="ECO:0000269" key="5">
    <source>
    </source>
</evidence>
<evidence type="ECO:0000269" key="6">
    <source>
    </source>
</evidence>
<evidence type="ECO:0000269" key="7">
    <source>
    </source>
</evidence>
<evidence type="ECO:0000269" key="8">
    <source>
    </source>
</evidence>
<evidence type="ECO:0000269" key="9">
    <source ref="14"/>
</evidence>
<evidence type="ECO:0000305" key="10"/>
<evidence type="ECO:0007744" key="11">
    <source>
    </source>
</evidence>
<evidence type="ECO:0007744" key="12">
    <source>
    </source>
</evidence>
<evidence type="ECO:0007829" key="13">
    <source>
        <dbReference type="PDB" id="2BP1"/>
    </source>
</evidence>
<gene>
    <name type="primary">AKR7A2</name>
    <name type="synonym">AFAR</name>
    <name type="synonym">AFAR1</name>
    <name type="synonym">AKR7</name>
</gene>